<evidence type="ECO:0000250" key="1"/>
<evidence type="ECO:0000255" key="2">
    <source>
        <dbReference type="HAMAP-Rule" id="MF_00047"/>
    </source>
</evidence>
<evidence type="ECO:0007829" key="3">
    <source>
        <dbReference type="PDB" id="5NRI"/>
    </source>
</evidence>
<dbReference type="EC" id="6.3.2.4" evidence="2"/>
<dbReference type="EMBL" id="CP000572">
    <property type="protein sequence ID" value="ABN90443.1"/>
    <property type="molecule type" value="Genomic_DNA"/>
</dbReference>
<dbReference type="RefSeq" id="WP_004194254.1">
    <property type="nucleotide sequence ID" value="NC_009076.1"/>
</dbReference>
<dbReference type="PDB" id="5NRH">
    <property type="method" value="X-ray"/>
    <property type="resolution" value="1.30 A"/>
    <property type="chains" value="A/B=1-312"/>
</dbReference>
<dbReference type="PDB" id="5NRI">
    <property type="method" value="X-ray"/>
    <property type="resolution" value="1.50 A"/>
    <property type="chains" value="A/B=1-312"/>
</dbReference>
<dbReference type="PDBsum" id="5NRH"/>
<dbReference type="PDBsum" id="5NRI"/>
<dbReference type="SMR" id="A3NZL3"/>
<dbReference type="KEGG" id="bpl:BURPS1106A_3548"/>
<dbReference type="HOGENOM" id="CLU_039268_1_2_4"/>
<dbReference type="UniPathway" id="UPA00219"/>
<dbReference type="Proteomes" id="UP000006738">
    <property type="component" value="Chromosome I"/>
</dbReference>
<dbReference type="GO" id="GO:0005829">
    <property type="term" value="C:cytosol"/>
    <property type="evidence" value="ECO:0007669"/>
    <property type="project" value="TreeGrafter"/>
</dbReference>
<dbReference type="GO" id="GO:0005524">
    <property type="term" value="F:ATP binding"/>
    <property type="evidence" value="ECO:0007669"/>
    <property type="project" value="UniProtKB-KW"/>
</dbReference>
<dbReference type="GO" id="GO:0008716">
    <property type="term" value="F:D-alanine-D-alanine ligase activity"/>
    <property type="evidence" value="ECO:0007669"/>
    <property type="project" value="UniProtKB-UniRule"/>
</dbReference>
<dbReference type="GO" id="GO:0046872">
    <property type="term" value="F:metal ion binding"/>
    <property type="evidence" value="ECO:0007669"/>
    <property type="project" value="UniProtKB-KW"/>
</dbReference>
<dbReference type="GO" id="GO:0071555">
    <property type="term" value="P:cell wall organization"/>
    <property type="evidence" value="ECO:0007669"/>
    <property type="project" value="UniProtKB-KW"/>
</dbReference>
<dbReference type="GO" id="GO:0009252">
    <property type="term" value="P:peptidoglycan biosynthetic process"/>
    <property type="evidence" value="ECO:0007669"/>
    <property type="project" value="UniProtKB-UniRule"/>
</dbReference>
<dbReference type="GO" id="GO:0008360">
    <property type="term" value="P:regulation of cell shape"/>
    <property type="evidence" value="ECO:0007669"/>
    <property type="project" value="UniProtKB-KW"/>
</dbReference>
<dbReference type="FunFam" id="3.30.1490.20:FF:000007">
    <property type="entry name" value="D-alanine--D-alanine ligase"/>
    <property type="match status" value="1"/>
</dbReference>
<dbReference type="FunFam" id="3.30.470.20:FF:000008">
    <property type="entry name" value="D-alanine--D-alanine ligase"/>
    <property type="match status" value="1"/>
</dbReference>
<dbReference type="FunFam" id="3.40.50.20:FF:000013">
    <property type="entry name" value="D-alanine--D-alanine ligase"/>
    <property type="match status" value="1"/>
</dbReference>
<dbReference type="Gene3D" id="3.40.50.20">
    <property type="match status" value="1"/>
</dbReference>
<dbReference type="Gene3D" id="3.30.1490.20">
    <property type="entry name" value="ATP-grasp fold, A domain"/>
    <property type="match status" value="1"/>
</dbReference>
<dbReference type="Gene3D" id="3.30.470.20">
    <property type="entry name" value="ATP-grasp fold, B domain"/>
    <property type="match status" value="1"/>
</dbReference>
<dbReference type="HAMAP" id="MF_00047">
    <property type="entry name" value="Dala_Dala_lig"/>
    <property type="match status" value="1"/>
</dbReference>
<dbReference type="InterPro" id="IPR011761">
    <property type="entry name" value="ATP-grasp"/>
</dbReference>
<dbReference type="InterPro" id="IPR013815">
    <property type="entry name" value="ATP_grasp_subdomain_1"/>
</dbReference>
<dbReference type="InterPro" id="IPR000291">
    <property type="entry name" value="D-Ala_lig_Van_CS"/>
</dbReference>
<dbReference type="InterPro" id="IPR005905">
    <property type="entry name" value="D_ala_D_ala"/>
</dbReference>
<dbReference type="InterPro" id="IPR011095">
    <property type="entry name" value="Dala_Dala_lig_C"/>
</dbReference>
<dbReference type="InterPro" id="IPR011127">
    <property type="entry name" value="Dala_Dala_lig_N"/>
</dbReference>
<dbReference type="InterPro" id="IPR016185">
    <property type="entry name" value="PreATP-grasp_dom_sf"/>
</dbReference>
<dbReference type="NCBIfam" id="TIGR01205">
    <property type="entry name" value="D_ala_D_alaTIGR"/>
    <property type="match status" value="1"/>
</dbReference>
<dbReference type="NCBIfam" id="NF002378">
    <property type="entry name" value="PRK01372.1"/>
    <property type="match status" value="1"/>
</dbReference>
<dbReference type="PANTHER" id="PTHR23132">
    <property type="entry name" value="D-ALANINE--D-ALANINE LIGASE"/>
    <property type="match status" value="1"/>
</dbReference>
<dbReference type="PANTHER" id="PTHR23132:SF23">
    <property type="entry name" value="D-ALANINE--D-ALANINE LIGASE B"/>
    <property type="match status" value="1"/>
</dbReference>
<dbReference type="Pfam" id="PF07478">
    <property type="entry name" value="Dala_Dala_lig_C"/>
    <property type="match status" value="1"/>
</dbReference>
<dbReference type="Pfam" id="PF01820">
    <property type="entry name" value="Dala_Dala_lig_N"/>
    <property type="match status" value="1"/>
</dbReference>
<dbReference type="PIRSF" id="PIRSF039102">
    <property type="entry name" value="Ddl/VanB"/>
    <property type="match status" value="1"/>
</dbReference>
<dbReference type="SUPFAM" id="SSF56059">
    <property type="entry name" value="Glutathione synthetase ATP-binding domain-like"/>
    <property type="match status" value="1"/>
</dbReference>
<dbReference type="SUPFAM" id="SSF52440">
    <property type="entry name" value="PreATP-grasp domain"/>
    <property type="match status" value="1"/>
</dbReference>
<dbReference type="PROSITE" id="PS50975">
    <property type="entry name" value="ATP_GRASP"/>
    <property type="match status" value="1"/>
</dbReference>
<dbReference type="PROSITE" id="PS00843">
    <property type="entry name" value="DALA_DALA_LIGASE_1"/>
    <property type="match status" value="1"/>
</dbReference>
<dbReference type="PROSITE" id="PS00844">
    <property type="entry name" value="DALA_DALA_LIGASE_2"/>
    <property type="match status" value="1"/>
</dbReference>
<reference key="1">
    <citation type="journal article" date="2010" name="Genome Biol. Evol.">
        <title>Continuing evolution of Burkholderia mallei through genome reduction and large-scale rearrangements.</title>
        <authorList>
            <person name="Losada L."/>
            <person name="Ronning C.M."/>
            <person name="DeShazer D."/>
            <person name="Woods D."/>
            <person name="Fedorova N."/>
            <person name="Kim H.S."/>
            <person name="Shabalina S.A."/>
            <person name="Pearson T.R."/>
            <person name="Brinkac L."/>
            <person name="Tan P."/>
            <person name="Nandi T."/>
            <person name="Crabtree J."/>
            <person name="Badger J."/>
            <person name="Beckstrom-Sternberg S."/>
            <person name="Saqib M."/>
            <person name="Schutzer S.E."/>
            <person name="Keim P."/>
            <person name="Nierman W.C."/>
        </authorList>
    </citation>
    <scope>NUCLEOTIDE SEQUENCE [LARGE SCALE GENOMIC DNA]</scope>
    <source>
        <strain>1106a</strain>
    </source>
</reference>
<name>DDL_BURP0</name>
<keyword id="KW-0002">3D-structure</keyword>
<keyword id="KW-0067">ATP-binding</keyword>
<keyword id="KW-0133">Cell shape</keyword>
<keyword id="KW-0961">Cell wall biogenesis/degradation</keyword>
<keyword id="KW-0963">Cytoplasm</keyword>
<keyword id="KW-0436">Ligase</keyword>
<keyword id="KW-0460">Magnesium</keyword>
<keyword id="KW-0464">Manganese</keyword>
<keyword id="KW-0479">Metal-binding</keyword>
<keyword id="KW-0547">Nucleotide-binding</keyword>
<keyword id="KW-0573">Peptidoglycan synthesis</keyword>
<accession>A3NZL3</accession>
<comment type="function">
    <text evidence="2">Cell wall formation.</text>
</comment>
<comment type="catalytic activity">
    <reaction evidence="2">
        <text>2 D-alanine + ATP = D-alanyl-D-alanine + ADP + phosphate + H(+)</text>
        <dbReference type="Rhea" id="RHEA:11224"/>
        <dbReference type="ChEBI" id="CHEBI:15378"/>
        <dbReference type="ChEBI" id="CHEBI:30616"/>
        <dbReference type="ChEBI" id="CHEBI:43474"/>
        <dbReference type="ChEBI" id="CHEBI:57416"/>
        <dbReference type="ChEBI" id="CHEBI:57822"/>
        <dbReference type="ChEBI" id="CHEBI:456216"/>
        <dbReference type="EC" id="6.3.2.4"/>
    </reaction>
</comment>
<comment type="cofactor">
    <cofactor evidence="1">
        <name>Mg(2+)</name>
        <dbReference type="ChEBI" id="CHEBI:18420"/>
    </cofactor>
    <cofactor evidence="1">
        <name>Mn(2+)</name>
        <dbReference type="ChEBI" id="CHEBI:29035"/>
    </cofactor>
    <text evidence="1">Binds 2 magnesium or manganese ions per subunit.</text>
</comment>
<comment type="pathway">
    <text evidence="2">Cell wall biogenesis; peptidoglycan biosynthesis.</text>
</comment>
<comment type="subcellular location">
    <subcellularLocation>
        <location evidence="2">Cytoplasm</location>
    </subcellularLocation>
</comment>
<comment type="similarity">
    <text evidence="2">Belongs to the D-alanine--D-alanine ligase family.</text>
</comment>
<protein>
    <recommendedName>
        <fullName evidence="2">D-alanine--D-alanine ligase</fullName>
        <ecNumber evidence="2">6.3.2.4</ecNumber>
    </recommendedName>
    <alternativeName>
        <fullName evidence="2">D-Ala-D-Ala ligase</fullName>
    </alternativeName>
    <alternativeName>
        <fullName evidence="2">D-alanylalanine synthetase</fullName>
    </alternativeName>
</protein>
<feature type="chain" id="PRO_0000341075" description="D-alanine--D-alanine ligase">
    <location>
        <begin position="1"/>
        <end position="312"/>
    </location>
</feature>
<feature type="domain" description="ATP-grasp" evidence="2">
    <location>
        <begin position="108"/>
        <end position="308"/>
    </location>
</feature>
<feature type="binding site" evidence="2">
    <location>
        <begin position="138"/>
        <end position="193"/>
    </location>
    <ligand>
        <name>ATP</name>
        <dbReference type="ChEBI" id="CHEBI:30616"/>
    </ligand>
</feature>
<feature type="binding site" evidence="2">
    <location>
        <position position="262"/>
    </location>
    <ligand>
        <name>Mg(2+)</name>
        <dbReference type="ChEBI" id="CHEBI:18420"/>
        <label>1</label>
    </ligand>
</feature>
<feature type="binding site" evidence="2">
    <location>
        <position position="275"/>
    </location>
    <ligand>
        <name>Mg(2+)</name>
        <dbReference type="ChEBI" id="CHEBI:18420"/>
        <label>1</label>
    </ligand>
</feature>
<feature type="binding site" evidence="2">
    <location>
        <position position="275"/>
    </location>
    <ligand>
        <name>Mg(2+)</name>
        <dbReference type="ChEBI" id="CHEBI:18420"/>
        <label>2</label>
    </ligand>
</feature>
<feature type="binding site" evidence="2">
    <location>
        <position position="277"/>
    </location>
    <ligand>
        <name>Mg(2+)</name>
        <dbReference type="ChEBI" id="CHEBI:18420"/>
        <label>2</label>
    </ligand>
</feature>
<feature type="helix" evidence="3">
    <location>
        <begin position="6"/>
        <end position="9"/>
    </location>
</feature>
<feature type="strand" evidence="3">
    <location>
        <begin position="11"/>
        <end position="15"/>
    </location>
</feature>
<feature type="helix" evidence="3">
    <location>
        <begin position="23"/>
        <end position="39"/>
    </location>
</feature>
<feature type="strand" evidence="3">
    <location>
        <begin position="43"/>
        <end position="47"/>
    </location>
</feature>
<feature type="turn" evidence="3">
    <location>
        <begin position="49"/>
        <end position="51"/>
    </location>
</feature>
<feature type="helix" evidence="3">
    <location>
        <begin position="56"/>
        <end position="59"/>
    </location>
</feature>
<feature type="strand" evidence="3">
    <location>
        <begin position="64"/>
        <end position="67"/>
    </location>
</feature>
<feature type="helix" evidence="3">
    <location>
        <begin position="72"/>
        <end position="74"/>
    </location>
</feature>
<feature type="helix" evidence="3">
    <location>
        <begin position="78"/>
        <end position="85"/>
    </location>
</feature>
<feature type="strand" evidence="3">
    <location>
        <begin position="89"/>
        <end position="92"/>
    </location>
</feature>
<feature type="helix" evidence="3">
    <location>
        <begin position="95"/>
        <end position="101"/>
    </location>
</feature>
<feature type="helix" evidence="3">
    <location>
        <begin position="104"/>
        <end position="113"/>
    </location>
</feature>
<feature type="strand" evidence="3">
    <location>
        <begin position="121"/>
        <end position="125"/>
    </location>
</feature>
<feature type="helix" evidence="3">
    <location>
        <begin position="130"/>
        <end position="141"/>
    </location>
</feature>
<feature type="strand" evidence="3">
    <location>
        <begin position="145"/>
        <end position="151"/>
    </location>
</feature>
<feature type="strand" evidence="3">
    <location>
        <begin position="159"/>
        <end position="161"/>
    </location>
</feature>
<feature type="helix" evidence="3">
    <location>
        <begin position="164"/>
        <end position="166"/>
    </location>
</feature>
<feature type="helix" evidence="3">
    <location>
        <begin position="167"/>
        <end position="177"/>
    </location>
</feature>
<feature type="strand" evidence="3">
    <location>
        <begin position="179"/>
        <end position="185"/>
    </location>
</feature>
<feature type="strand" evidence="3">
    <location>
        <begin position="189"/>
        <end position="198"/>
    </location>
</feature>
<feature type="strand" evidence="3">
    <location>
        <begin position="206"/>
        <end position="209"/>
    </location>
</feature>
<feature type="strand" evidence="3">
    <location>
        <begin position="211"/>
        <end position="215"/>
    </location>
</feature>
<feature type="helix" evidence="3">
    <location>
        <begin position="217"/>
        <end position="221"/>
    </location>
</feature>
<feature type="strand" evidence="3">
    <location>
        <begin position="227"/>
        <end position="231"/>
    </location>
</feature>
<feature type="helix" evidence="3">
    <location>
        <begin position="236"/>
        <end position="252"/>
    </location>
</feature>
<feature type="strand" evidence="3">
    <location>
        <begin position="257"/>
        <end position="266"/>
    </location>
</feature>
<feature type="strand" evidence="3">
    <location>
        <begin position="271"/>
        <end position="279"/>
    </location>
</feature>
<feature type="helix" evidence="3">
    <location>
        <begin position="287"/>
        <end position="293"/>
    </location>
</feature>
<feature type="turn" evidence="3">
    <location>
        <begin position="294"/>
        <end position="296"/>
    </location>
</feature>
<feature type="helix" evidence="3">
    <location>
        <begin position="299"/>
        <end position="308"/>
    </location>
</feature>
<sequence length="312" mass="33341">MSGIDPKRFGKVAVLLGGDSAEREVSLNSGRLVLQGLRDAGIDAHPFDPAQRPLAALKDEGFVRAFNALHGGYGENGQIQGALDFYGIRYTGSGVLGSALGLDKFRTKLVWQQTGIPTPPFETVMRGDDYAARAQDIVAKLGVPLFVKPASEGSSVAVEKVKSADALPAALEEAAKHDKIVIVEKSIEGGGEYTACIAADLDLPLIRIVPAGEFYDYHAKYIANDTQYLIPCGLDAAKEAEFKRIARRAFDVLGCTDWGRADFMLDAAGNPYFLEVNTAPGMTDHSLPPKAARAVGIGYSELVVKVLSLTLD</sequence>
<organism>
    <name type="scientific">Burkholderia pseudomallei (strain 1106a)</name>
    <dbReference type="NCBI Taxonomy" id="357348"/>
    <lineage>
        <taxon>Bacteria</taxon>
        <taxon>Pseudomonadati</taxon>
        <taxon>Pseudomonadota</taxon>
        <taxon>Betaproteobacteria</taxon>
        <taxon>Burkholderiales</taxon>
        <taxon>Burkholderiaceae</taxon>
        <taxon>Burkholderia</taxon>
        <taxon>pseudomallei group</taxon>
    </lineage>
</organism>
<gene>
    <name evidence="2" type="primary">ddl</name>
    <name type="ordered locus">BURPS1106A_3548</name>
</gene>
<proteinExistence type="evidence at protein level"/>